<reference key="1">
    <citation type="submission" date="2006-12" db="EMBL/GenBank/DDBJ databases">
        <title>Complete sequence of Halorhodospira halophila SL1.</title>
        <authorList>
            <consortium name="US DOE Joint Genome Institute"/>
            <person name="Copeland A."/>
            <person name="Lucas S."/>
            <person name="Lapidus A."/>
            <person name="Barry K."/>
            <person name="Detter J.C."/>
            <person name="Glavina del Rio T."/>
            <person name="Hammon N."/>
            <person name="Israni S."/>
            <person name="Dalin E."/>
            <person name="Tice H."/>
            <person name="Pitluck S."/>
            <person name="Saunders E."/>
            <person name="Brettin T."/>
            <person name="Bruce D."/>
            <person name="Han C."/>
            <person name="Tapia R."/>
            <person name="Schmutz J."/>
            <person name="Larimer F."/>
            <person name="Land M."/>
            <person name="Hauser L."/>
            <person name="Kyrpides N."/>
            <person name="Mikhailova N."/>
            <person name="Hoff W."/>
            <person name="Richardson P."/>
        </authorList>
    </citation>
    <scope>NUCLEOTIDE SEQUENCE [LARGE SCALE GENOMIC DNA]</scope>
    <source>
        <strain>DSM 244 / SL1</strain>
    </source>
</reference>
<accession>A1WVG1</accession>
<sequence>MQVTEGQLVALQDARFALVAARFNDLIVDRLIDGAADTLRRHGVPEEHLELIRVPGSFELPLAVQRVADAGRADAVIALGAVIRGGTDHHQYVAAECTKGVAQAMMGSGVPVSYGVLTVETVEQAIERAGTKAGNKGAEAALSALEMVDLMRQLEA</sequence>
<dbReference type="EC" id="2.5.1.78" evidence="1"/>
<dbReference type="EMBL" id="CP000544">
    <property type="protein sequence ID" value="ABM61673.1"/>
    <property type="molecule type" value="Genomic_DNA"/>
</dbReference>
<dbReference type="SMR" id="A1WVG1"/>
<dbReference type="STRING" id="349124.Hhal_0897"/>
<dbReference type="KEGG" id="hha:Hhal_0897"/>
<dbReference type="eggNOG" id="COG0054">
    <property type="taxonomic scope" value="Bacteria"/>
</dbReference>
<dbReference type="HOGENOM" id="CLU_089358_1_1_6"/>
<dbReference type="OrthoDB" id="9809709at2"/>
<dbReference type="UniPathway" id="UPA00275">
    <property type="reaction ID" value="UER00404"/>
</dbReference>
<dbReference type="Proteomes" id="UP000000647">
    <property type="component" value="Chromosome"/>
</dbReference>
<dbReference type="GO" id="GO:0005829">
    <property type="term" value="C:cytosol"/>
    <property type="evidence" value="ECO:0007669"/>
    <property type="project" value="TreeGrafter"/>
</dbReference>
<dbReference type="GO" id="GO:0009349">
    <property type="term" value="C:riboflavin synthase complex"/>
    <property type="evidence" value="ECO:0007669"/>
    <property type="project" value="InterPro"/>
</dbReference>
<dbReference type="GO" id="GO:0000906">
    <property type="term" value="F:6,7-dimethyl-8-ribityllumazine synthase activity"/>
    <property type="evidence" value="ECO:0007669"/>
    <property type="project" value="UniProtKB-UniRule"/>
</dbReference>
<dbReference type="GO" id="GO:0009231">
    <property type="term" value="P:riboflavin biosynthetic process"/>
    <property type="evidence" value="ECO:0007669"/>
    <property type="project" value="UniProtKB-UniRule"/>
</dbReference>
<dbReference type="CDD" id="cd09209">
    <property type="entry name" value="Lumazine_synthase-I"/>
    <property type="match status" value="1"/>
</dbReference>
<dbReference type="FunFam" id="3.40.50.960:FF:000001">
    <property type="entry name" value="6,7-dimethyl-8-ribityllumazine synthase"/>
    <property type="match status" value="1"/>
</dbReference>
<dbReference type="Gene3D" id="3.40.50.960">
    <property type="entry name" value="Lumazine/riboflavin synthase"/>
    <property type="match status" value="1"/>
</dbReference>
<dbReference type="HAMAP" id="MF_00178">
    <property type="entry name" value="Lumazine_synth"/>
    <property type="match status" value="1"/>
</dbReference>
<dbReference type="InterPro" id="IPR034964">
    <property type="entry name" value="LS"/>
</dbReference>
<dbReference type="InterPro" id="IPR002180">
    <property type="entry name" value="LS/RS"/>
</dbReference>
<dbReference type="InterPro" id="IPR036467">
    <property type="entry name" value="LS/RS_sf"/>
</dbReference>
<dbReference type="NCBIfam" id="TIGR00114">
    <property type="entry name" value="lumazine-synth"/>
    <property type="match status" value="1"/>
</dbReference>
<dbReference type="NCBIfam" id="NF000812">
    <property type="entry name" value="PRK00061.1-4"/>
    <property type="match status" value="1"/>
</dbReference>
<dbReference type="PANTHER" id="PTHR21058:SF0">
    <property type="entry name" value="6,7-DIMETHYL-8-RIBITYLLUMAZINE SYNTHASE"/>
    <property type="match status" value="1"/>
</dbReference>
<dbReference type="PANTHER" id="PTHR21058">
    <property type="entry name" value="6,7-DIMETHYL-8-RIBITYLLUMAZINE SYNTHASE DMRL SYNTHASE LUMAZINE SYNTHASE"/>
    <property type="match status" value="1"/>
</dbReference>
<dbReference type="Pfam" id="PF00885">
    <property type="entry name" value="DMRL_synthase"/>
    <property type="match status" value="1"/>
</dbReference>
<dbReference type="SUPFAM" id="SSF52121">
    <property type="entry name" value="Lumazine synthase"/>
    <property type="match status" value="1"/>
</dbReference>
<keyword id="KW-1185">Reference proteome</keyword>
<keyword id="KW-0686">Riboflavin biosynthesis</keyword>
<keyword id="KW-0808">Transferase</keyword>
<evidence type="ECO:0000255" key="1">
    <source>
        <dbReference type="HAMAP-Rule" id="MF_00178"/>
    </source>
</evidence>
<name>RISB_HALHL</name>
<feature type="chain" id="PRO_1000058369" description="6,7-dimethyl-8-ribityllumazine synthase">
    <location>
        <begin position="1"/>
        <end position="156"/>
    </location>
</feature>
<feature type="active site" description="Proton donor" evidence="1">
    <location>
        <position position="89"/>
    </location>
</feature>
<feature type="binding site" evidence="1">
    <location>
        <position position="23"/>
    </location>
    <ligand>
        <name>5-amino-6-(D-ribitylamino)uracil</name>
        <dbReference type="ChEBI" id="CHEBI:15934"/>
    </ligand>
</feature>
<feature type="binding site" evidence="1">
    <location>
        <begin position="57"/>
        <end position="59"/>
    </location>
    <ligand>
        <name>5-amino-6-(D-ribitylamino)uracil</name>
        <dbReference type="ChEBI" id="CHEBI:15934"/>
    </ligand>
</feature>
<feature type="binding site" evidence="1">
    <location>
        <begin position="81"/>
        <end position="83"/>
    </location>
    <ligand>
        <name>5-amino-6-(D-ribitylamino)uracil</name>
        <dbReference type="ChEBI" id="CHEBI:15934"/>
    </ligand>
</feature>
<feature type="binding site" evidence="1">
    <location>
        <begin position="86"/>
        <end position="87"/>
    </location>
    <ligand>
        <name>(2S)-2-hydroxy-3-oxobutyl phosphate</name>
        <dbReference type="ChEBI" id="CHEBI:58830"/>
    </ligand>
</feature>
<feature type="binding site" evidence="1">
    <location>
        <position position="114"/>
    </location>
    <ligand>
        <name>5-amino-6-(D-ribitylamino)uracil</name>
        <dbReference type="ChEBI" id="CHEBI:15934"/>
    </ligand>
</feature>
<feature type="binding site" evidence="1">
    <location>
        <position position="128"/>
    </location>
    <ligand>
        <name>(2S)-2-hydroxy-3-oxobutyl phosphate</name>
        <dbReference type="ChEBI" id="CHEBI:58830"/>
    </ligand>
</feature>
<gene>
    <name evidence="1" type="primary">ribH</name>
    <name type="ordered locus">Hhal_0897</name>
</gene>
<organism>
    <name type="scientific">Halorhodospira halophila (strain DSM 244 / SL1)</name>
    <name type="common">Ectothiorhodospira halophila (strain DSM 244 / SL1)</name>
    <dbReference type="NCBI Taxonomy" id="349124"/>
    <lineage>
        <taxon>Bacteria</taxon>
        <taxon>Pseudomonadati</taxon>
        <taxon>Pseudomonadota</taxon>
        <taxon>Gammaproteobacteria</taxon>
        <taxon>Chromatiales</taxon>
        <taxon>Ectothiorhodospiraceae</taxon>
        <taxon>Halorhodospira</taxon>
    </lineage>
</organism>
<proteinExistence type="inferred from homology"/>
<comment type="function">
    <text evidence="1">Catalyzes the formation of 6,7-dimethyl-8-ribityllumazine by condensation of 5-amino-6-(D-ribitylamino)uracil with 3,4-dihydroxy-2-butanone 4-phosphate. This is the penultimate step in the biosynthesis of riboflavin.</text>
</comment>
<comment type="catalytic activity">
    <reaction evidence="1">
        <text>(2S)-2-hydroxy-3-oxobutyl phosphate + 5-amino-6-(D-ribitylamino)uracil = 6,7-dimethyl-8-(1-D-ribityl)lumazine + phosphate + 2 H2O + H(+)</text>
        <dbReference type="Rhea" id="RHEA:26152"/>
        <dbReference type="ChEBI" id="CHEBI:15377"/>
        <dbReference type="ChEBI" id="CHEBI:15378"/>
        <dbReference type="ChEBI" id="CHEBI:15934"/>
        <dbReference type="ChEBI" id="CHEBI:43474"/>
        <dbReference type="ChEBI" id="CHEBI:58201"/>
        <dbReference type="ChEBI" id="CHEBI:58830"/>
        <dbReference type="EC" id="2.5.1.78"/>
    </reaction>
</comment>
<comment type="pathway">
    <text evidence="1">Cofactor biosynthesis; riboflavin biosynthesis; riboflavin from 2-hydroxy-3-oxobutyl phosphate and 5-amino-6-(D-ribitylamino)uracil: step 1/2.</text>
</comment>
<comment type="subunit">
    <text evidence="1">Forms an icosahedral capsid composed of 60 subunits, arranged as a dodecamer of pentamers.</text>
</comment>
<comment type="similarity">
    <text evidence="1">Belongs to the DMRL synthase family.</text>
</comment>
<protein>
    <recommendedName>
        <fullName evidence="1">6,7-dimethyl-8-ribityllumazine synthase</fullName>
        <shortName evidence="1">DMRL synthase</shortName>
        <shortName evidence="1">LS</shortName>
        <shortName evidence="1">Lumazine synthase</shortName>
        <ecNumber evidence="1">2.5.1.78</ecNumber>
    </recommendedName>
</protein>